<comment type="function">
    <text evidence="1">Weak wide spectrum antimicrobial activity against Gram-positive bacteria.</text>
</comment>
<comment type="subcellular location">
    <subcellularLocation>
        <location evidence="1">Secreted</location>
    </subcellularLocation>
</comment>
<comment type="tissue specificity">
    <text evidence="1">Expressed by the skin dorsal glands.</text>
</comment>
<comment type="mass spectrometry" mass="1430.0" method="Electrospray" evidence="1"/>
<accession>P84273</accession>
<protein>
    <recommendedName>
        <fullName>Dahlein-1.1</fullName>
    </recommendedName>
</protein>
<reference evidence="2" key="1">
    <citation type="journal article" date="2001" name="Rapid Commun. Mass Spectrom.">
        <title>Bioactive dahlein peptides from the skin secretions of the Australian aquatic frog Litoria dahlii: sequence determination by electrospray mass spectrometry.</title>
        <authorList>
            <person name="Wegener K.L."/>
            <person name="Brinkworth C.S."/>
            <person name="Bowie J.H."/>
            <person name="Wallace J.C."/>
            <person name="Tyler M.J."/>
        </authorList>
    </citation>
    <scope>PROTEIN SEQUENCE</scope>
    <scope>FUNCTION</scope>
    <scope>SUBCELLULAR LOCATION</scope>
    <scope>TISSUE SPECIFICITY</scope>
    <scope>MASS SPECTROMETRY</scope>
    <source>
        <tissue evidence="1">Skin secretion</tissue>
    </source>
</reference>
<organism>
    <name type="scientific">Ranoidea dahlii</name>
    <name type="common">Dahl's aquatic frog</name>
    <name type="synonym">Litoria dahlii</name>
    <dbReference type="NCBI Taxonomy" id="299727"/>
    <lineage>
        <taxon>Eukaryota</taxon>
        <taxon>Metazoa</taxon>
        <taxon>Chordata</taxon>
        <taxon>Craniata</taxon>
        <taxon>Vertebrata</taxon>
        <taxon>Euteleostomi</taxon>
        <taxon>Amphibia</taxon>
        <taxon>Batrachia</taxon>
        <taxon>Anura</taxon>
        <taxon>Neobatrachia</taxon>
        <taxon>Hyloidea</taxon>
        <taxon>Hylidae</taxon>
        <taxon>Pelodryadinae</taxon>
        <taxon>Ranoidea</taxon>
    </lineage>
</organism>
<name>DAH11_RANDH</name>
<dbReference type="GO" id="GO:0005576">
    <property type="term" value="C:extracellular region"/>
    <property type="evidence" value="ECO:0000314"/>
    <property type="project" value="UniProtKB"/>
</dbReference>
<dbReference type="GO" id="GO:0050830">
    <property type="term" value="P:defense response to Gram-positive bacterium"/>
    <property type="evidence" value="ECO:0000314"/>
    <property type="project" value="UniProtKB"/>
</dbReference>
<dbReference type="InterPro" id="IPR013157">
    <property type="entry name" value="Aurein_antimicrobial_peptide"/>
</dbReference>
<dbReference type="Pfam" id="PF08256">
    <property type="entry name" value="Antimicrobial20"/>
    <property type="match status" value="1"/>
</dbReference>
<evidence type="ECO:0000269" key="1">
    <source>
    </source>
</evidence>
<evidence type="ECO:0000305" key="2"/>
<feature type="peptide" id="PRO_0000043772" description="Dahlein-1.1">
    <location>
        <begin position="1"/>
        <end position="13"/>
    </location>
</feature>
<sequence length="13" mass="1433">GLFDIIKNIVSTL</sequence>
<keyword id="KW-0878">Amphibian defense peptide</keyword>
<keyword id="KW-0044">Antibiotic</keyword>
<keyword id="KW-0929">Antimicrobial</keyword>
<keyword id="KW-0903">Direct protein sequencing</keyword>
<keyword id="KW-0964">Secreted</keyword>
<proteinExistence type="evidence at protein level"/>